<comment type="function">
    <text evidence="1">Pore-forming subunit of a potassium efflux system that confers protection against electrophiles. Catalyzes K(+)/H(+) antiport.</text>
</comment>
<comment type="subunit">
    <text evidence="1">Interacts with the regulatory subunit KefG.</text>
</comment>
<comment type="subcellular location">
    <subcellularLocation>
        <location evidence="1">Cell inner membrane</location>
        <topology evidence="1">Multi-pass membrane protein</topology>
    </subcellularLocation>
</comment>
<comment type="similarity">
    <text evidence="1">Belongs to the monovalent cation:proton antiporter 2 (CPA2) transporter (TC 2.A.37) family. KefB subfamily.</text>
</comment>
<feature type="chain" id="PRO_1000145523" description="Glutathione-regulated potassium-efflux system protein KefB">
    <location>
        <begin position="1"/>
        <end position="601"/>
    </location>
</feature>
<feature type="transmembrane region" description="Helical" evidence="1">
    <location>
        <begin position="4"/>
        <end position="24"/>
    </location>
</feature>
<feature type="transmembrane region" description="Helical" evidence="1">
    <location>
        <begin position="29"/>
        <end position="49"/>
    </location>
</feature>
<feature type="transmembrane region" description="Helical" evidence="1">
    <location>
        <begin position="55"/>
        <end position="75"/>
    </location>
</feature>
<feature type="transmembrane region" description="Helical" evidence="1">
    <location>
        <begin position="87"/>
        <end position="107"/>
    </location>
</feature>
<feature type="transmembrane region" description="Helical" evidence="1">
    <location>
        <begin position="115"/>
        <end position="135"/>
    </location>
</feature>
<feature type="transmembrane region" description="Helical" evidence="1">
    <location>
        <begin position="152"/>
        <end position="172"/>
    </location>
</feature>
<feature type="transmembrane region" description="Helical" evidence="1">
    <location>
        <begin position="177"/>
        <end position="197"/>
    </location>
</feature>
<feature type="transmembrane region" description="Helical" evidence="1">
    <location>
        <begin position="207"/>
        <end position="227"/>
    </location>
</feature>
<feature type="transmembrane region" description="Helical" evidence="1">
    <location>
        <begin position="230"/>
        <end position="250"/>
    </location>
</feature>
<feature type="transmembrane region" description="Helical" evidence="1">
    <location>
        <begin position="268"/>
        <end position="288"/>
    </location>
</feature>
<feature type="transmembrane region" description="Helical" evidence="1">
    <location>
        <begin position="291"/>
        <end position="311"/>
    </location>
</feature>
<feature type="transmembrane region" description="Helical" evidence="1">
    <location>
        <begin position="324"/>
        <end position="344"/>
    </location>
</feature>
<feature type="transmembrane region" description="Helical" evidence="1">
    <location>
        <begin position="356"/>
        <end position="376"/>
    </location>
</feature>
<feature type="domain" description="RCK N-terminal" evidence="2">
    <location>
        <begin position="400"/>
        <end position="519"/>
    </location>
</feature>
<keyword id="KW-0050">Antiport</keyword>
<keyword id="KW-0997">Cell inner membrane</keyword>
<keyword id="KW-1003">Cell membrane</keyword>
<keyword id="KW-0406">Ion transport</keyword>
<keyword id="KW-0472">Membrane</keyword>
<keyword id="KW-0630">Potassium</keyword>
<keyword id="KW-0633">Potassium transport</keyword>
<keyword id="KW-0812">Transmembrane</keyword>
<keyword id="KW-1133">Transmembrane helix</keyword>
<keyword id="KW-0813">Transport</keyword>
<gene>
    <name evidence="1" type="primary">kefB</name>
    <name type="ordered locus">EFER_3321</name>
</gene>
<accession>B7LS57</accession>
<proteinExistence type="inferred from homology"/>
<reference key="1">
    <citation type="journal article" date="2009" name="PLoS Genet.">
        <title>Organised genome dynamics in the Escherichia coli species results in highly diverse adaptive paths.</title>
        <authorList>
            <person name="Touchon M."/>
            <person name="Hoede C."/>
            <person name="Tenaillon O."/>
            <person name="Barbe V."/>
            <person name="Baeriswyl S."/>
            <person name="Bidet P."/>
            <person name="Bingen E."/>
            <person name="Bonacorsi S."/>
            <person name="Bouchier C."/>
            <person name="Bouvet O."/>
            <person name="Calteau A."/>
            <person name="Chiapello H."/>
            <person name="Clermont O."/>
            <person name="Cruveiller S."/>
            <person name="Danchin A."/>
            <person name="Diard M."/>
            <person name="Dossat C."/>
            <person name="Karoui M.E."/>
            <person name="Frapy E."/>
            <person name="Garry L."/>
            <person name="Ghigo J.M."/>
            <person name="Gilles A.M."/>
            <person name="Johnson J."/>
            <person name="Le Bouguenec C."/>
            <person name="Lescat M."/>
            <person name="Mangenot S."/>
            <person name="Martinez-Jehanne V."/>
            <person name="Matic I."/>
            <person name="Nassif X."/>
            <person name="Oztas S."/>
            <person name="Petit M.A."/>
            <person name="Pichon C."/>
            <person name="Rouy Z."/>
            <person name="Ruf C.S."/>
            <person name="Schneider D."/>
            <person name="Tourret J."/>
            <person name="Vacherie B."/>
            <person name="Vallenet D."/>
            <person name="Medigue C."/>
            <person name="Rocha E.P.C."/>
            <person name="Denamur E."/>
        </authorList>
    </citation>
    <scope>NUCLEOTIDE SEQUENCE [LARGE SCALE GENOMIC DNA]</scope>
    <source>
        <strain>ATCC 35469 / DSM 13698 / BCRC 15582 / CCUG 18766 / IAM 14443 / JCM 21226 / LMG 7866 / NBRC 102419 / NCTC 12128 / CDC 0568-73</strain>
    </source>
</reference>
<sequence length="601" mass="66425">MEGSDFLLAGVLFLFAAVAAVPLASRLGIGAVLGYLLAGIAIGPWGLGFISDVDEILHFSELGVVFLMFIIGLELNPSKLWQLRRSIFGVGAAQVLLSAALLAGLLMLTDFAWQAAVVGGIGLAMSSTAMALQLMREKGMNRSESGQLGFSVLLFQDLAVIPALALVPLLAGSADEHFDWMKIGMKVLAFVGMLIGGRYLLRPVFRFIAASGVREVFTAATLLLVLGSALFMDALGLSMALGTFIAGVLLAESEYRHELETAIDPFKGLLLGLFFISVGMSLNLGVLYTHLLWVVISVVVLVAVKILVLYLLARLYGVRSSERMQFAGVLSQGGEFAFVLFSTASSQRLFQGDQMALLLVTVTLSMMTTPLLMKLVDKWLSRQFNGPEEEDEKPWVNDDKPQVIVVGFGRFGQVIGRLLMANKMRITVLERDISAVNLMRKYGYKVYYGDATQVDLLRSAGAEAAESIVITCNEPEDTMKLVEICQQHFPHLHILARARGRVEAHELLQAGVTQFSRETFSSALELGRKTLVTLGMHPHQAQRAQLHFRRLDMRMLRELIPMHADTVQISRAREARRELEEIFQREMQQERRQLDGWDEFE</sequence>
<organism>
    <name type="scientific">Escherichia fergusonii (strain ATCC 35469 / DSM 13698 / CCUG 18766 / IAM 14443 / JCM 21226 / LMG 7866 / NBRC 102419 / NCTC 12128 / CDC 0568-73)</name>
    <dbReference type="NCBI Taxonomy" id="585054"/>
    <lineage>
        <taxon>Bacteria</taxon>
        <taxon>Pseudomonadati</taxon>
        <taxon>Pseudomonadota</taxon>
        <taxon>Gammaproteobacteria</taxon>
        <taxon>Enterobacterales</taxon>
        <taxon>Enterobacteriaceae</taxon>
        <taxon>Escherichia</taxon>
    </lineage>
</organism>
<dbReference type="EMBL" id="CU928158">
    <property type="protein sequence ID" value="CAQ90800.1"/>
    <property type="molecule type" value="Genomic_DNA"/>
</dbReference>
<dbReference type="RefSeq" id="WP_000399122.1">
    <property type="nucleotide sequence ID" value="NC_011740.1"/>
</dbReference>
<dbReference type="SMR" id="B7LS57"/>
<dbReference type="GeneID" id="93778647"/>
<dbReference type="KEGG" id="efe:EFER_3321"/>
<dbReference type="HOGENOM" id="CLU_005126_9_3_6"/>
<dbReference type="OrthoDB" id="9781411at2"/>
<dbReference type="Proteomes" id="UP000000745">
    <property type="component" value="Chromosome"/>
</dbReference>
<dbReference type="GO" id="GO:0005886">
    <property type="term" value="C:plasma membrane"/>
    <property type="evidence" value="ECO:0007669"/>
    <property type="project" value="UniProtKB-SubCell"/>
</dbReference>
<dbReference type="GO" id="GO:0015503">
    <property type="term" value="F:glutathione-regulated potassium exporter activity"/>
    <property type="evidence" value="ECO:0007669"/>
    <property type="project" value="UniProtKB-UniRule"/>
</dbReference>
<dbReference type="GO" id="GO:1902600">
    <property type="term" value="P:proton transmembrane transport"/>
    <property type="evidence" value="ECO:0007669"/>
    <property type="project" value="InterPro"/>
</dbReference>
<dbReference type="FunFam" id="1.20.1530.20:FF:000001">
    <property type="entry name" value="Glutathione-regulated potassium-efflux system protein KefB"/>
    <property type="match status" value="1"/>
</dbReference>
<dbReference type="FunFam" id="3.40.50.720:FF:000036">
    <property type="entry name" value="Glutathione-regulated potassium-efflux system protein KefB"/>
    <property type="match status" value="1"/>
</dbReference>
<dbReference type="Gene3D" id="1.20.1530.20">
    <property type="match status" value="1"/>
</dbReference>
<dbReference type="Gene3D" id="3.40.50.720">
    <property type="entry name" value="NAD(P)-binding Rossmann-like Domain"/>
    <property type="match status" value="1"/>
</dbReference>
<dbReference type="HAMAP" id="MF_01412">
    <property type="entry name" value="K_H_efflux_KefB"/>
    <property type="match status" value="1"/>
</dbReference>
<dbReference type="InterPro" id="IPR006153">
    <property type="entry name" value="Cation/H_exchanger_TM"/>
</dbReference>
<dbReference type="InterPro" id="IPR004771">
    <property type="entry name" value="K/H_exchanger"/>
</dbReference>
<dbReference type="InterPro" id="IPR020884">
    <property type="entry name" value="K_H_efflux_KefB"/>
</dbReference>
<dbReference type="InterPro" id="IPR038770">
    <property type="entry name" value="Na+/solute_symporter_sf"/>
</dbReference>
<dbReference type="InterPro" id="IPR036291">
    <property type="entry name" value="NAD(P)-bd_dom_sf"/>
</dbReference>
<dbReference type="InterPro" id="IPR003148">
    <property type="entry name" value="RCK_N"/>
</dbReference>
<dbReference type="NCBIfam" id="TIGR00932">
    <property type="entry name" value="2a37"/>
    <property type="match status" value="1"/>
</dbReference>
<dbReference type="NCBIfam" id="NF002973">
    <property type="entry name" value="PRK03659.1"/>
    <property type="match status" value="1"/>
</dbReference>
<dbReference type="PANTHER" id="PTHR46157">
    <property type="entry name" value="K(+) EFFLUX ANTIPORTER 3, CHLOROPLASTIC"/>
    <property type="match status" value="1"/>
</dbReference>
<dbReference type="PANTHER" id="PTHR46157:SF4">
    <property type="entry name" value="K(+) EFFLUX ANTIPORTER 3, CHLOROPLASTIC"/>
    <property type="match status" value="1"/>
</dbReference>
<dbReference type="Pfam" id="PF00999">
    <property type="entry name" value="Na_H_Exchanger"/>
    <property type="match status" value="1"/>
</dbReference>
<dbReference type="Pfam" id="PF02254">
    <property type="entry name" value="TrkA_N"/>
    <property type="match status" value="1"/>
</dbReference>
<dbReference type="SUPFAM" id="SSF51735">
    <property type="entry name" value="NAD(P)-binding Rossmann-fold domains"/>
    <property type="match status" value="1"/>
</dbReference>
<dbReference type="PROSITE" id="PS51201">
    <property type="entry name" value="RCK_N"/>
    <property type="match status" value="1"/>
</dbReference>
<evidence type="ECO:0000255" key="1">
    <source>
        <dbReference type="HAMAP-Rule" id="MF_01412"/>
    </source>
</evidence>
<evidence type="ECO:0000255" key="2">
    <source>
        <dbReference type="PROSITE-ProRule" id="PRU00543"/>
    </source>
</evidence>
<protein>
    <recommendedName>
        <fullName evidence="1">Glutathione-regulated potassium-efflux system protein KefB</fullName>
    </recommendedName>
    <alternativeName>
        <fullName evidence="1">K(+)/H(+) antiporter</fullName>
    </alternativeName>
</protein>
<name>KEFB_ESCF3</name>